<dbReference type="EMBL" id="CP001127">
    <property type="protein sequence ID" value="ACF90696.1"/>
    <property type="molecule type" value="Genomic_DNA"/>
</dbReference>
<dbReference type="RefSeq" id="WP_001277205.1">
    <property type="nucleotide sequence ID" value="NC_011094.1"/>
</dbReference>
<dbReference type="SMR" id="B4TV71"/>
<dbReference type="KEGG" id="sew:SeSA_A3276"/>
<dbReference type="HOGENOM" id="CLU_130694_5_0_6"/>
<dbReference type="Proteomes" id="UP000001865">
    <property type="component" value="Chromosome"/>
</dbReference>
<dbReference type="GO" id="GO:0005737">
    <property type="term" value="C:cytoplasm"/>
    <property type="evidence" value="ECO:0007669"/>
    <property type="project" value="TreeGrafter"/>
</dbReference>
<dbReference type="Gene3D" id="3.30.1200.10">
    <property type="entry name" value="YggU-like"/>
    <property type="match status" value="1"/>
</dbReference>
<dbReference type="HAMAP" id="MF_00634">
    <property type="entry name" value="UPF0235"/>
    <property type="match status" value="1"/>
</dbReference>
<dbReference type="InterPro" id="IPR003746">
    <property type="entry name" value="DUF167"/>
</dbReference>
<dbReference type="InterPro" id="IPR036591">
    <property type="entry name" value="YggU-like_sf"/>
</dbReference>
<dbReference type="NCBIfam" id="TIGR00251">
    <property type="entry name" value="DUF167 family protein"/>
    <property type="match status" value="1"/>
</dbReference>
<dbReference type="NCBIfam" id="NF003466">
    <property type="entry name" value="PRK05090.1"/>
    <property type="match status" value="1"/>
</dbReference>
<dbReference type="PANTHER" id="PTHR13420">
    <property type="entry name" value="UPF0235 PROTEIN C15ORF40"/>
    <property type="match status" value="1"/>
</dbReference>
<dbReference type="PANTHER" id="PTHR13420:SF7">
    <property type="entry name" value="UPF0235 PROTEIN C15ORF40"/>
    <property type="match status" value="1"/>
</dbReference>
<dbReference type="Pfam" id="PF02594">
    <property type="entry name" value="DUF167"/>
    <property type="match status" value="1"/>
</dbReference>
<dbReference type="SMART" id="SM01152">
    <property type="entry name" value="DUF167"/>
    <property type="match status" value="1"/>
</dbReference>
<dbReference type="SUPFAM" id="SSF69786">
    <property type="entry name" value="YggU-like"/>
    <property type="match status" value="1"/>
</dbReference>
<feature type="chain" id="PRO_1000130713" description="UPF0235 protein YggU">
    <location>
        <begin position="1"/>
        <end position="96"/>
    </location>
</feature>
<gene>
    <name evidence="1" type="primary">yggU</name>
    <name type="ordered locus">SeSA_A3276</name>
</gene>
<comment type="similarity">
    <text evidence="1">Belongs to the UPF0235 family.</text>
</comment>
<sequence length="96" mass="10517">MSAVTRCEDGLVLRLYIQPKASRDSIVGLHGDEVKVAITAPPVDGQANSHLTKFLGKQFRVAKSQIVIEKGELGRHKQVKIIHPQQIPPEIAALTE</sequence>
<organism>
    <name type="scientific">Salmonella schwarzengrund (strain CVM19633)</name>
    <dbReference type="NCBI Taxonomy" id="439843"/>
    <lineage>
        <taxon>Bacteria</taxon>
        <taxon>Pseudomonadati</taxon>
        <taxon>Pseudomonadota</taxon>
        <taxon>Gammaproteobacteria</taxon>
        <taxon>Enterobacterales</taxon>
        <taxon>Enterobacteriaceae</taxon>
        <taxon>Salmonella</taxon>
    </lineage>
</organism>
<reference key="1">
    <citation type="journal article" date="2011" name="J. Bacteriol.">
        <title>Comparative genomics of 28 Salmonella enterica isolates: evidence for CRISPR-mediated adaptive sublineage evolution.</title>
        <authorList>
            <person name="Fricke W.F."/>
            <person name="Mammel M.K."/>
            <person name="McDermott P.F."/>
            <person name="Tartera C."/>
            <person name="White D.G."/>
            <person name="Leclerc J.E."/>
            <person name="Ravel J."/>
            <person name="Cebula T.A."/>
        </authorList>
    </citation>
    <scope>NUCLEOTIDE SEQUENCE [LARGE SCALE GENOMIC DNA]</scope>
    <source>
        <strain>CVM19633</strain>
    </source>
</reference>
<protein>
    <recommendedName>
        <fullName evidence="1">UPF0235 protein YggU</fullName>
    </recommendedName>
</protein>
<proteinExistence type="inferred from homology"/>
<accession>B4TV71</accession>
<name>YGGU_SALSV</name>
<evidence type="ECO:0000255" key="1">
    <source>
        <dbReference type="HAMAP-Rule" id="MF_00634"/>
    </source>
</evidence>